<reference key="1">
    <citation type="journal article" date="2003" name="Proc. Natl. Acad. Sci. U.S.A.">
        <title>The complete genome sequence of the Arabidopsis and tomato pathogen Pseudomonas syringae pv. tomato DC3000.</title>
        <authorList>
            <person name="Buell C.R."/>
            <person name="Joardar V."/>
            <person name="Lindeberg M."/>
            <person name="Selengut J."/>
            <person name="Paulsen I.T."/>
            <person name="Gwinn M.L."/>
            <person name="Dodson R.J."/>
            <person name="DeBoy R.T."/>
            <person name="Durkin A.S."/>
            <person name="Kolonay J.F."/>
            <person name="Madupu R."/>
            <person name="Daugherty S.C."/>
            <person name="Brinkac L.M."/>
            <person name="Beanan M.J."/>
            <person name="Haft D.H."/>
            <person name="Nelson W.C."/>
            <person name="Davidsen T.M."/>
            <person name="Zafar N."/>
            <person name="Zhou L."/>
            <person name="Liu J."/>
            <person name="Yuan Q."/>
            <person name="Khouri H.M."/>
            <person name="Fedorova N.B."/>
            <person name="Tran B."/>
            <person name="Russell D."/>
            <person name="Berry K.J."/>
            <person name="Utterback T.R."/>
            <person name="Van Aken S.E."/>
            <person name="Feldblyum T.V."/>
            <person name="D'Ascenzo M."/>
            <person name="Deng W.-L."/>
            <person name="Ramos A.R."/>
            <person name="Alfano J.R."/>
            <person name="Cartinhour S."/>
            <person name="Chatterjee A.K."/>
            <person name="Delaney T.P."/>
            <person name="Lazarowitz S.G."/>
            <person name="Martin G.B."/>
            <person name="Schneider D.J."/>
            <person name="Tang X."/>
            <person name="Bender C.L."/>
            <person name="White O."/>
            <person name="Fraser C.M."/>
            <person name="Collmer A."/>
        </authorList>
    </citation>
    <scope>NUCLEOTIDE SEQUENCE [LARGE SCALE GENOMIC DNA]</scope>
    <source>
        <strain>ATCC BAA-871 / DC3000</strain>
    </source>
</reference>
<comment type="function">
    <text evidence="1">One of the primary rRNA binding proteins, this protein initially binds near the 5'-end of the 23S rRNA. It is important during the early stages of 50S assembly. It makes multiple contacts with different domains of the 23S rRNA in the assembled 50S subunit and ribosome.</text>
</comment>
<comment type="function">
    <text evidence="1">Forms part of the polypeptide exit tunnel.</text>
</comment>
<comment type="subunit">
    <text evidence="1">Part of the 50S ribosomal subunit.</text>
</comment>
<comment type="similarity">
    <text evidence="1">Belongs to the universal ribosomal protein uL4 family.</text>
</comment>
<dbReference type="EMBL" id="AE016853">
    <property type="protein sequence ID" value="AAO54169.1"/>
    <property type="molecule type" value="Genomic_DNA"/>
</dbReference>
<dbReference type="RefSeq" id="NP_790474.1">
    <property type="nucleotide sequence ID" value="NC_004578.1"/>
</dbReference>
<dbReference type="RefSeq" id="WP_002555489.1">
    <property type="nucleotide sequence ID" value="NC_004578.1"/>
</dbReference>
<dbReference type="SMR" id="Q889X0"/>
<dbReference type="STRING" id="223283.PSPTO_0627"/>
<dbReference type="GeneID" id="96221029"/>
<dbReference type="KEGG" id="pst:PSPTO_0627"/>
<dbReference type="PATRIC" id="fig|223283.9.peg.633"/>
<dbReference type="eggNOG" id="COG0088">
    <property type="taxonomic scope" value="Bacteria"/>
</dbReference>
<dbReference type="HOGENOM" id="CLU_041575_5_2_6"/>
<dbReference type="OrthoDB" id="9803201at2"/>
<dbReference type="PhylomeDB" id="Q889X0"/>
<dbReference type="Proteomes" id="UP000002515">
    <property type="component" value="Chromosome"/>
</dbReference>
<dbReference type="GO" id="GO:1990904">
    <property type="term" value="C:ribonucleoprotein complex"/>
    <property type="evidence" value="ECO:0007669"/>
    <property type="project" value="UniProtKB-KW"/>
</dbReference>
<dbReference type="GO" id="GO:0005840">
    <property type="term" value="C:ribosome"/>
    <property type="evidence" value="ECO:0007669"/>
    <property type="project" value="UniProtKB-KW"/>
</dbReference>
<dbReference type="GO" id="GO:0019843">
    <property type="term" value="F:rRNA binding"/>
    <property type="evidence" value="ECO:0007669"/>
    <property type="project" value="UniProtKB-UniRule"/>
</dbReference>
<dbReference type="GO" id="GO:0003735">
    <property type="term" value="F:structural constituent of ribosome"/>
    <property type="evidence" value="ECO:0007669"/>
    <property type="project" value="InterPro"/>
</dbReference>
<dbReference type="GO" id="GO:0006412">
    <property type="term" value="P:translation"/>
    <property type="evidence" value="ECO:0007669"/>
    <property type="project" value="UniProtKB-UniRule"/>
</dbReference>
<dbReference type="FunFam" id="3.40.1370.10:FF:000001">
    <property type="entry name" value="50S ribosomal protein L4"/>
    <property type="match status" value="1"/>
</dbReference>
<dbReference type="Gene3D" id="3.40.1370.10">
    <property type="match status" value="1"/>
</dbReference>
<dbReference type="HAMAP" id="MF_01328_B">
    <property type="entry name" value="Ribosomal_uL4_B"/>
    <property type="match status" value="1"/>
</dbReference>
<dbReference type="InterPro" id="IPR002136">
    <property type="entry name" value="Ribosomal_uL4"/>
</dbReference>
<dbReference type="InterPro" id="IPR013005">
    <property type="entry name" value="Ribosomal_uL4-like"/>
</dbReference>
<dbReference type="InterPro" id="IPR023574">
    <property type="entry name" value="Ribosomal_uL4_dom_sf"/>
</dbReference>
<dbReference type="NCBIfam" id="TIGR03953">
    <property type="entry name" value="rplD_bact"/>
    <property type="match status" value="1"/>
</dbReference>
<dbReference type="PANTHER" id="PTHR10746">
    <property type="entry name" value="50S RIBOSOMAL PROTEIN L4"/>
    <property type="match status" value="1"/>
</dbReference>
<dbReference type="PANTHER" id="PTHR10746:SF6">
    <property type="entry name" value="LARGE RIBOSOMAL SUBUNIT PROTEIN UL4M"/>
    <property type="match status" value="1"/>
</dbReference>
<dbReference type="Pfam" id="PF00573">
    <property type="entry name" value="Ribosomal_L4"/>
    <property type="match status" value="1"/>
</dbReference>
<dbReference type="SUPFAM" id="SSF52166">
    <property type="entry name" value="Ribosomal protein L4"/>
    <property type="match status" value="1"/>
</dbReference>
<feature type="chain" id="PRO_0000129261" description="Large ribosomal subunit protein uL4">
    <location>
        <begin position="1"/>
        <end position="200"/>
    </location>
</feature>
<feature type="region of interest" description="Disordered" evidence="2">
    <location>
        <begin position="38"/>
        <end position="68"/>
    </location>
</feature>
<feature type="compositionally biased region" description="Basic residues" evidence="2">
    <location>
        <begin position="54"/>
        <end position="65"/>
    </location>
</feature>
<gene>
    <name evidence="1" type="primary">rplD</name>
    <name type="ordered locus">PSPTO_0627</name>
</gene>
<evidence type="ECO:0000255" key="1">
    <source>
        <dbReference type="HAMAP-Rule" id="MF_01328"/>
    </source>
</evidence>
<evidence type="ECO:0000256" key="2">
    <source>
        <dbReference type="SAM" id="MobiDB-lite"/>
    </source>
</evidence>
<evidence type="ECO:0000305" key="3"/>
<proteinExistence type="inferred from homology"/>
<protein>
    <recommendedName>
        <fullName evidence="1">Large ribosomal subunit protein uL4</fullName>
    </recommendedName>
    <alternativeName>
        <fullName evidence="3">50S ribosomal protein L4</fullName>
    </alternativeName>
</protein>
<organism>
    <name type="scientific">Pseudomonas syringae pv. tomato (strain ATCC BAA-871 / DC3000)</name>
    <dbReference type="NCBI Taxonomy" id="223283"/>
    <lineage>
        <taxon>Bacteria</taxon>
        <taxon>Pseudomonadati</taxon>
        <taxon>Pseudomonadota</taxon>
        <taxon>Gammaproteobacteria</taxon>
        <taxon>Pseudomonadales</taxon>
        <taxon>Pseudomonadaceae</taxon>
        <taxon>Pseudomonas</taxon>
    </lineage>
</organism>
<name>RL4_PSESM</name>
<sequence>MQLNVNDAQAIEVSELTFGGEFNETLVHQAVVAYMAGGRQGSKQQKTRSDVRGGGKRPWRQKGTGRARAGTIRSPIWRGGGTTFAARPQDHTQKLNKKMYRAALRSILAELVRTDRLVVVQDFAVEAPKTKDLLNKLTGMGLTDVLIVSDAVDQNLYLAARNLPHVDVRDVQGSDPVSLIAYDKVLITVSAVKKFEELLG</sequence>
<accession>Q889X0</accession>
<keyword id="KW-1185">Reference proteome</keyword>
<keyword id="KW-0687">Ribonucleoprotein</keyword>
<keyword id="KW-0689">Ribosomal protein</keyword>
<keyword id="KW-0694">RNA-binding</keyword>
<keyword id="KW-0699">rRNA-binding</keyword>